<feature type="chain" id="PRO_0000209278" description="Bifunctional glutamine synthetase adenylyltransferase/adenylyl-removing enzyme">
    <location>
        <begin position="1"/>
        <end position="946"/>
    </location>
</feature>
<feature type="region of interest" description="Adenylyl removase" evidence="1">
    <location>
        <begin position="1"/>
        <end position="440"/>
    </location>
</feature>
<feature type="region of interest" description="Adenylyl transferase" evidence="1">
    <location>
        <begin position="449"/>
        <end position="946"/>
    </location>
</feature>
<keyword id="KW-0067">ATP-binding</keyword>
<keyword id="KW-0460">Magnesium</keyword>
<keyword id="KW-0511">Multifunctional enzyme</keyword>
<keyword id="KW-0547">Nucleotide-binding</keyword>
<keyword id="KW-0548">Nucleotidyltransferase</keyword>
<keyword id="KW-1185">Reference proteome</keyword>
<keyword id="KW-0808">Transferase</keyword>
<protein>
    <recommendedName>
        <fullName evidence="1">Bifunctional glutamine synthetase adenylyltransferase/adenylyl-removing enzyme</fullName>
    </recommendedName>
    <alternativeName>
        <fullName evidence="1">ATP:glutamine synthetase adenylyltransferase</fullName>
    </alternativeName>
    <alternativeName>
        <fullName evidence="1">ATase</fullName>
    </alternativeName>
    <domain>
        <recommendedName>
            <fullName evidence="1">Glutamine synthetase adenylyl-L-tyrosine phosphorylase</fullName>
            <ecNumber evidence="1">2.7.7.89</ecNumber>
        </recommendedName>
        <alternativeName>
            <fullName evidence="1">Adenylyl removase</fullName>
            <shortName evidence="1">AR</shortName>
            <shortName evidence="1">AT-N</shortName>
        </alternativeName>
    </domain>
    <domain>
        <recommendedName>
            <fullName evidence="1">Glutamine synthetase adenylyl transferase</fullName>
            <ecNumber evidence="1">2.7.7.42</ecNumber>
        </recommendedName>
        <alternativeName>
            <fullName evidence="1">Adenylyl transferase</fullName>
            <shortName evidence="1">AT</shortName>
            <shortName evidence="1">AT-C</shortName>
        </alternativeName>
    </domain>
</protein>
<comment type="function">
    <text evidence="1">Involved in the regulation of glutamine synthetase GlnA, a key enzyme in the process to assimilate ammonia. When cellular nitrogen levels are high, the C-terminal adenylyl transferase (AT) inactivates GlnA by covalent transfer of an adenylyl group from ATP to specific tyrosine residue of GlnA, thus reducing its activity. Conversely, when nitrogen levels are low, the N-terminal adenylyl removase (AR) activates GlnA by removing the adenylyl group by phosphorolysis, increasing its activity. The regulatory region of GlnE binds the signal transduction protein PII (GlnB) which indicates the nitrogen status of the cell.</text>
</comment>
<comment type="catalytic activity">
    <reaction evidence="1">
        <text>[glutamine synthetase]-O(4)-(5'-adenylyl)-L-tyrosine + phosphate = [glutamine synthetase]-L-tyrosine + ADP</text>
        <dbReference type="Rhea" id="RHEA:43716"/>
        <dbReference type="Rhea" id="RHEA-COMP:10660"/>
        <dbReference type="Rhea" id="RHEA-COMP:10661"/>
        <dbReference type="ChEBI" id="CHEBI:43474"/>
        <dbReference type="ChEBI" id="CHEBI:46858"/>
        <dbReference type="ChEBI" id="CHEBI:83624"/>
        <dbReference type="ChEBI" id="CHEBI:456216"/>
        <dbReference type="EC" id="2.7.7.89"/>
    </reaction>
</comment>
<comment type="catalytic activity">
    <reaction evidence="1">
        <text>[glutamine synthetase]-L-tyrosine + ATP = [glutamine synthetase]-O(4)-(5'-adenylyl)-L-tyrosine + diphosphate</text>
        <dbReference type="Rhea" id="RHEA:18589"/>
        <dbReference type="Rhea" id="RHEA-COMP:10660"/>
        <dbReference type="Rhea" id="RHEA-COMP:10661"/>
        <dbReference type="ChEBI" id="CHEBI:30616"/>
        <dbReference type="ChEBI" id="CHEBI:33019"/>
        <dbReference type="ChEBI" id="CHEBI:46858"/>
        <dbReference type="ChEBI" id="CHEBI:83624"/>
        <dbReference type="EC" id="2.7.7.42"/>
    </reaction>
</comment>
<comment type="cofactor">
    <cofactor evidence="1">
        <name>Mg(2+)</name>
        <dbReference type="ChEBI" id="CHEBI:18420"/>
    </cofactor>
</comment>
<comment type="similarity">
    <text evidence="1">Belongs to the GlnE family.</text>
</comment>
<evidence type="ECO:0000255" key="1">
    <source>
        <dbReference type="HAMAP-Rule" id="MF_00802"/>
    </source>
</evidence>
<reference key="1">
    <citation type="journal article" date="2002" name="Nucleic Acids Res.">
        <title>Genome sequence of Shigella flexneri 2a: insights into pathogenicity through comparison with genomes of Escherichia coli K12 and O157.</title>
        <authorList>
            <person name="Jin Q."/>
            <person name="Yuan Z."/>
            <person name="Xu J."/>
            <person name="Wang Y."/>
            <person name="Shen Y."/>
            <person name="Lu W."/>
            <person name="Wang J."/>
            <person name="Liu H."/>
            <person name="Yang J."/>
            <person name="Yang F."/>
            <person name="Zhang X."/>
            <person name="Zhang J."/>
            <person name="Yang G."/>
            <person name="Wu H."/>
            <person name="Qu D."/>
            <person name="Dong J."/>
            <person name="Sun L."/>
            <person name="Xue Y."/>
            <person name="Zhao A."/>
            <person name="Gao Y."/>
            <person name="Zhu J."/>
            <person name="Kan B."/>
            <person name="Ding K."/>
            <person name="Chen S."/>
            <person name="Cheng H."/>
            <person name="Yao Z."/>
            <person name="He B."/>
            <person name="Chen R."/>
            <person name="Ma D."/>
            <person name="Qiang B."/>
            <person name="Wen Y."/>
            <person name="Hou Y."/>
            <person name="Yu J."/>
        </authorList>
    </citation>
    <scope>NUCLEOTIDE SEQUENCE [LARGE SCALE GENOMIC DNA]</scope>
    <source>
        <strain>301 / Serotype 2a</strain>
    </source>
</reference>
<reference key="2">
    <citation type="journal article" date="2003" name="Infect. Immun.">
        <title>Complete genome sequence and comparative genomics of Shigella flexneri serotype 2a strain 2457T.</title>
        <authorList>
            <person name="Wei J."/>
            <person name="Goldberg M.B."/>
            <person name="Burland V."/>
            <person name="Venkatesan M.M."/>
            <person name="Deng W."/>
            <person name="Fournier G."/>
            <person name="Mayhew G.F."/>
            <person name="Plunkett G. III"/>
            <person name="Rose D.J."/>
            <person name="Darling A."/>
            <person name="Mau B."/>
            <person name="Perna N.T."/>
            <person name="Payne S.M."/>
            <person name="Runyen-Janecky L.J."/>
            <person name="Zhou S."/>
            <person name="Schwartz D.C."/>
            <person name="Blattner F.R."/>
        </authorList>
    </citation>
    <scope>NUCLEOTIDE SEQUENCE [LARGE SCALE GENOMIC DNA]</scope>
    <source>
        <strain>ATCC 700930 / 2457T / Serotype 2a</strain>
    </source>
</reference>
<organism>
    <name type="scientific">Shigella flexneri</name>
    <dbReference type="NCBI Taxonomy" id="623"/>
    <lineage>
        <taxon>Bacteria</taxon>
        <taxon>Pseudomonadati</taxon>
        <taxon>Pseudomonadota</taxon>
        <taxon>Gammaproteobacteria</taxon>
        <taxon>Enterobacterales</taxon>
        <taxon>Enterobacteriaceae</taxon>
        <taxon>Shigella</taxon>
    </lineage>
</organism>
<gene>
    <name evidence="1" type="primary">glnE</name>
    <name type="ordered locus">SF3094</name>
    <name type="ordered locus">S3299</name>
</gene>
<sequence>MKPLSSPLQQYWQTVVERLPELLAEESLSAQAKSVLTFSDFVQDSVIAHPEWLTELESQPPQADEWQHYSVWLQEALSNVSDEAGLMRELRLFRRRIMVRIAWAQTLALVTEESILQQLSYLAETLIVAARDWLYDACCREWGTPCNAQGEAQPLLILGMGKLGGGELNFSSDIDLIFAWPEHGCTQGGRRELDNAQFFTRMGQRLIKVLDQPTQDGFVYRVDMRLRPFGESGPLVLSFAALEDYYQEQGRDWERYAMVKARIMGDSEGVYANELRAMLRPFVFRRYIDFSVIQSLRNMKGMIAREVRRRGLTDNIKLGAGGIREIEFIVQVFQLIRGGREPLLQSRSLLPTLSAIAALHLLSENDAEQLRVAYLFLRRLENLLQSINDEQTQTLPSDELNRARLAWAMDFADWPQLTGALTAHMTNVRRVFNELIGDDESETQEESLSEQWRELWQDALQEDDTTPVLAHLSEDDRKQVLTMIADFRKELDKRTIGPRGRQVLDHLMPHLLSDVCAREDAAVTLSRITALLVGIVTRTTYLELLSEFPAALKHLISLCAASPMIASQLARYPLLLDELLDPNTLYQPTATDAYRDELRQYLLRVPEDDEEQQLEALRQFKQAQLLRIAAADIAGTLPVMKVSDHLTWLAEAMIDAVVQQAWGQMVARYGKPNHLNEREGRGFAVVGYGKLGGWELGYSSDLDLIFLHDCPMDAMTDGEREIDGRQFYLRLAQRIMHLFSTRTSSGILYEVDARLRPSGAAGMLVTSAEAFADYQKNEAWTWEHQALVRARVVYGDPQLTAHFDAVRREIMTLPREGKTLQTEVREMREKMRAHLGNKHRNRFDIKADEGGITDIEFITQYLVLRYAHEKPKLTRWSDNVRILELLAQNDIMEEQEAMALTRAYTTLRDELHHLALQELPGHVSEDCFTAERDLVRASWQKWLVEE</sequence>
<name>GLNE_SHIFL</name>
<dbReference type="EC" id="2.7.7.89" evidence="1"/>
<dbReference type="EC" id="2.7.7.42" evidence="1"/>
<dbReference type="EMBL" id="AE005674">
    <property type="protein sequence ID" value="AAN44570.2"/>
    <property type="molecule type" value="Genomic_DNA"/>
</dbReference>
<dbReference type="EMBL" id="AE014073">
    <property type="protein sequence ID" value="AAP18382.1"/>
    <property type="molecule type" value="Genomic_DNA"/>
</dbReference>
<dbReference type="RefSeq" id="NP_708863.2">
    <property type="nucleotide sequence ID" value="NC_004337.2"/>
</dbReference>
<dbReference type="RefSeq" id="WP_005051914.1">
    <property type="nucleotide sequence ID" value="NZ_WPGW01000061.1"/>
</dbReference>
<dbReference type="SMR" id="Q7UBI7"/>
<dbReference type="STRING" id="198214.SF3094"/>
<dbReference type="PaxDb" id="198214-SF3094"/>
<dbReference type="GeneID" id="1026840"/>
<dbReference type="KEGG" id="sfl:SF3094"/>
<dbReference type="KEGG" id="sfx:S3299"/>
<dbReference type="PATRIC" id="fig|198214.7.peg.3671"/>
<dbReference type="HOGENOM" id="CLU_006233_0_1_6"/>
<dbReference type="Proteomes" id="UP000001006">
    <property type="component" value="Chromosome"/>
</dbReference>
<dbReference type="Proteomes" id="UP000002673">
    <property type="component" value="Chromosome"/>
</dbReference>
<dbReference type="GO" id="GO:0005829">
    <property type="term" value="C:cytosol"/>
    <property type="evidence" value="ECO:0007669"/>
    <property type="project" value="TreeGrafter"/>
</dbReference>
<dbReference type="GO" id="GO:0008882">
    <property type="term" value="F:[glutamate-ammonia-ligase] adenylyltransferase activity"/>
    <property type="evidence" value="ECO:0007669"/>
    <property type="project" value="UniProtKB-UniRule"/>
</dbReference>
<dbReference type="GO" id="GO:0047388">
    <property type="term" value="F:[glutamine synthetase]-adenylyl-L-tyrosine phosphorylase activity"/>
    <property type="evidence" value="ECO:0007669"/>
    <property type="project" value="UniProtKB-EC"/>
</dbReference>
<dbReference type="GO" id="GO:0005524">
    <property type="term" value="F:ATP binding"/>
    <property type="evidence" value="ECO:0007669"/>
    <property type="project" value="UniProtKB-UniRule"/>
</dbReference>
<dbReference type="GO" id="GO:0000287">
    <property type="term" value="F:magnesium ion binding"/>
    <property type="evidence" value="ECO:0007669"/>
    <property type="project" value="UniProtKB-UniRule"/>
</dbReference>
<dbReference type="GO" id="GO:0000820">
    <property type="term" value="P:regulation of glutamine family amino acid metabolic process"/>
    <property type="evidence" value="ECO:0007669"/>
    <property type="project" value="UniProtKB-UniRule"/>
</dbReference>
<dbReference type="CDD" id="cd05401">
    <property type="entry name" value="NT_GlnE_GlnD_like"/>
    <property type="match status" value="2"/>
</dbReference>
<dbReference type="FunFam" id="1.10.4050.10:FF:000001">
    <property type="entry name" value="Bifunctional glutamine synthetase adenylyltransferase/adenylyl-removing enzyme"/>
    <property type="match status" value="1"/>
</dbReference>
<dbReference type="FunFam" id="1.20.120.1510:FF:000001">
    <property type="entry name" value="Bifunctional glutamine synthetase adenylyltransferase/adenylyl-removing enzyme"/>
    <property type="match status" value="1"/>
</dbReference>
<dbReference type="FunFam" id="1.20.120.330:FF:000005">
    <property type="entry name" value="Bifunctional glutamine synthetase adenylyltransferase/adenylyl-removing enzyme"/>
    <property type="match status" value="1"/>
</dbReference>
<dbReference type="FunFam" id="1.20.120.330:FF:000008">
    <property type="entry name" value="Bifunctional glutamine synthetase adenylyltransferase/adenylyl-removing enzyme"/>
    <property type="match status" value="1"/>
</dbReference>
<dbReference type="FunFam" id="3.30.460.10:FF:000009">
    <property type="entry name" value="Bifunctional glutamine synthetase adenylyltransferase/adenylyl-removing enzyme"/>
    <property type="match status" value="1"/>
</dbReference>
<dbReference type="FunFam" id="3.30.460.10:FF:000014">
    <property type="entry name" value="Bifunctional glutamine synthetase adenylyltransferase/adenylyl-removing enzyme"/>
    <property type="match status" value="1"/>
</dbReference>
<dbReference type="Gene3D" id="1.20.120.1510">
    <property type="match status" value="1"/>
</dbReference>
<dbReference type="Gene3D" id="3.30.460.10">
    <property type="entry name" value="Beta Polymerase, domain 2"/>
    <property type="match status" value="2"/>
</dbReference>
<dbReference type="Gene3D" id="1.10.4050.10">
    <property type="entry name" value="Glutamine synthase adenylyltransferase GlnE"/>
    <property type="match status" value="1"/>
</dbReference>
<dbReference type="Gene3D" id="1.20.120.330">
    <property type="entry name" value="Nucleotidyltransferases domain 2"/>
    <property type="match status" value="2"/>
</dbReference>
<dbReference type="HAMAP" id="MF_00802">
    <property type="entry name" value="GlnE"/>
    <property type="match status" value="1"/>
</dbReference>
<dbReference type="InterPro" id="IPR023057">
    <property type="entry name" value="GlnE"/>
</dbReference>
<dbReference type="InterPro" id="IPR005190">
    <property type="entry name" value="GlnE_rpt_dom"/>
</dbReference>
<dbReference type="InterPro" id="IPR043519">
    <property type="entry name" value="NT_sf"/>
</dbReference>
<dbReference type="InterPro" id="IPR013546">
    <property type="entry name" value="PII_UdlTrfase/GS_AdlTrfase"/>
</dbReference>
<dbReference type="NCBIfam" id="NF008292">
    <property type="entry name" value="PRK11072.1"/>
    <property type="match status" value="1"/>
</dbReference>
<dbReference type="PANTHER" id="PTHR30621:SF0">
    <property type="entry name" value="BIFUNCTIONAL GLUTAMINE SYNTHETASE ADENYLYLTRANSFERASE_ADENYLYL-REMOVING ENZYME"/>
    <property type="match status" value="1"/>
</dbReference>
<dbReference type="PANTHER" id="PTHR30621">
    <property type="entry name" value="GLUTAMINE SYNTHETASE ADENYLYLTRANSFERASE"/>
    <property type="match status" value="1"/>
</dbReference>
<dbReference type="Pfam" id="PF08335">
    <property type="entry name" value="GlnD_UR_UTase"/>
    <property type="match status" value="2"/>
</dbReference>
<dbReference type="Pfam" id="PF03710">
    <property type="entry name" value="GlnE"/>
    <property type="match status" value="2"/>
</dbReference>
<dbReference type="SUPFAM" id="SSF81301">
    <property type="entry name" value="Nucleotidyltransferase"/>
    <property type="match status" value="2"/>
</dbReference>
<dbReference type="SUPFAM" id="SSF81593">
    <property type="entry name" value="Nucleotidyltransferase substrate binding subunit/domain"/>
    <property type="match status" value="2"/>
</dbReference>
<proteinExistence type="inferred from homology"/>
<accession>Q7UBI7</accession>
<accession>Q83Q46</accession>